<gene>
    <name evidence="1" type="primary">atpA</name>
    <name type="ordered locus">CJJ81176_0140</name>
</gene>
<feature type="chain" id="PRO_0000302635" description="ATP synthase subunit alpha">
    <location>
        <begin position="1"/>
        <end position="501"/>
    </location>
</feature>
<feature type="binding site" evidence="1">
    <location>
        <begin position="169"/>
        <end position="176"/>
    </location>
    <ligand>
        <name>ATP</name>
        <dbReference type="ChEBI" id="CHEBI:30616"/>
    </ligand>
</feature>
<feature type="site" description="Required for activity" evidence="1">
    <location>
        <position position="362"/>
    </location>
</feature>
<dbReference type="EC" id="7.1.2.2" evidence="1"/>
<dbReference type="EMBL" id="CP000538">
    <property type="protein sequence ID" value="EAQ71942.1"/>
    <property type="molecule type" value="Genomic_DNA"/>
</dbReference>
<dbReference type="RefSeq" id="WP_002857732.1">
    <property type="nucleotide sequence ID" value="NC_008787.1"/>
</dbReference>
<dbReference type="SMR" id="A1VXI8"/>
<dbReference type="KEGG" id="cjj:CJJ81176_0140"/>
<dbReference type="eggNOG" id="COG0056">
    <property type="taxonomic scope" value="Bacteria"/>
</dbReference>
<dbReference type="HOGENOM" id="CLU_010091_2_1_7"/>
<dbReference type="Proteomes" id="UP000000646">
    <property type="component" value="Chromosome"/>
</dbReference>
<dbReference type="GO" id="GO:0005886">
    <property type="term" value="C:plasma membrane"/>
    <property type="evidence" value="ECO:0007669"/>
    <property type="project" value="UniProtKB-SubCell"/>
</dbReference>
<dbReference type="GO" id="GO:0045259">
    <property type="term" value="C:proton-transporting ATP synthase complex"/>
    <property type="evidence" value="ECO:0007669"/>
    <property type="project" value="UniProtKB-KW"/>
</dbReference>
<dbReference type="GO" id="GO:0043531">
    <property type="term" value="F:ADP binding"/>
    <property type="evidence" value="ECO:0007669"/>
    <property type="project" value="TreeGrafter"/>
</dbReference>
<dbReference type="GO" id="GO:0005524">
    <property type="term" value="F:ATP binding"/>
    <property type="evidence" value="ECO:0007669"/>
    <property type="project" value="UniProtKB-UniRule"/>
</dbReference>
<dbReference type="GO" id="GO:0046933">
    <property type="term" value="F:proton-transporting ATP synthase activity, rotational mechanism"/>
    <property type="evidence" value="ECO:0007669"/>
    <property type="project" value="UniProtKB-UniRule"/>
</dbReference>
<dbReference type="CDD" id="cd18113">
    <property type="entry name" value="ATP-synt_F1_alpha_C"/>
    <property type="match status" value="1"/>
</dbReference>
<dbReference type="CDD" id="cd18116">
    <property type="entry name" value="ATP-synt_F1_alpha_N"/>
    <property type="match status" value="1"/>
</dbReference>
<dbReference type="CDD" id="cd01132">
    <property type="entry name" value="F1-ATPase_alpha_CD"/>
    <property type="match status" value="1"/>
</dbReference>
<dbReference type="FunFam" id="1.20.150.20:FF:000001">
    <property type="entry name" value="ATP synthase subunit alpha"/>
    <property type="match status" value="1"/>
</dbReference>
<dbReference type="FunFam" id="2.40.30.20:FF:000001">
    <property type="entry name" value="ATP synthase subunit alpha"/>
    <property type="match status" value="1"/>
</dbReference>
<dbReference type="FunFam" id="3.40.50.300:FF:000002">
    <property type="entry name" value="ATP synthase subunit alpha"/>
    <property type="match status" value="1"/>
</dbReference>
<dbReference type="Gene3D" id="2.40.30.20">
    <property type="match status" value="1"/>
</dbReference>
<dbReference type="Gene3D" id="1.20.150.20">
    <property type="entry name" value="ATP synthase alpha/beta chain, C-terminal domain"/>
    <property type="match status" value="1"/>
</dbReference>
<dbReference type="Gene3D" id="3.40.50.300">
    <property type="entry name" value="P-loop containing nucleotide triphosphate hydrolases"/>
    <property type="match status" value="1"/>
</dbReference>
<dbReference type="HAMAP" id="MF_01346">
    <property type="entry name" value="ATP_synth_alpha_bact"/>
    <property type="match status" value="1"/>
</dbReference>
<dbReference type="InterPro" id="IPR023366">
    <property type="entry name" value="ATP_synth_asu-like_sf"/>
</dbReference>
<dbReference type="InterPro" id="IPR000793">
    <property type="entry name" value="ATP_synth_asu_C"/>
</dbReference>
<dbReference type="InterPro" id="IPR038376">
    <property type="entry name" value="ATP_synth_asu_C_sf"/>
</dbReference>
<dbReference type="InterPro" id="IPR033732">
    <property type="entry name" value="ATP_synth_F1_a_nt-bd_dom"/>
</dbReference>
<dbReference type="InterPro" id="IPR005294">
    <property type="entry name" value="ATP_synth_F1_asu"/>
</dbReference>
<dbReference type="InterPro" id="IPR020003">
    <property type="entry name" value="ATPase_a/bsu_AS"/>
</dbReference>
<dbReference type="InterPro" id="IPR004100">
    <property type="entry name" value="ATPase_F1/V1/A1_a/bsu_N"/>
</dbReference>
<dbReference type="InterPro" id="IPR036121">
    <property type="entry name" value="ATPase_F1/V1/A1_a/bsu_N_sf"/>
</dbReference>
<dbReference type="InterPro" id="IPR000194">
    <property type="entry name" value="ATPase_F1/V1/A1_a/bsu_nucl-bd"/>
</dbReference>
<dbReference type="InterPro" id="IPR027417">
    <property type="entry name" value="P-loop_NTPase"/>
</dbReference>
<dbReference type="NCBIfam" id="TIGR00962">
    <property type="entry name" value="atpA"/>
    <property type="match status" value="1"/>
</dbReference>
<dbReference type="NCBIfam" id="NF009884">
    <property type="entry name" value="PRK13343.1"/>
    <property type="match status" value="1"/>
</dbReference>
<dbReference type="PANTHER" id="PTHR48082">
    <property type="entry name" value="ATP SYNTHASE SUBUNIT ALPHA, MITOCHONDRIAL"/>
    <property type="match status" value="1"/>
</dbReference>
<dbReference type="PANTHER" id="PTHR48082:SF2">
    <property type="entry name" value="ATP SYNTHASE SUBUNIT ALPHA, MITOCHONDRIAL"/>
    <property type="match status" value="1"/>
</dbReference>
<dbReference type="Pfam" id="PF00006">
    <property type="entry name" value="ATP-synt_ab"/>
    <property type="match status" value="1"/>
</dbReference>
<dbReference type="Pfam" id="PF00306">
    <property type="entry name" value="ATP-synt_ab_C"/>
    <property type="match status" value="1"/>
</dbReference>
<dbReference type="Pfam" id="PF02874">
    <property type="entry name" value="ATP-synt_ab_N"/>
    <property type="match status" value="1"/>
</dbReference>
<dbReference type="PIRSF" id="PIRSF039088">
    <property type="entry name" value="F_ATPase_subunit_alpha"/>
    <property type="match status" value="1"/>
</dbReference>
<dbReference type="SUPFAM" id="SSF47917">
    <property type="entry name" value="C-terminal domain of alpha and beta subunits of F1 ATP synthase"/>
    <property type="match status" value="1"/>
</dbReference>
<dbReference type="SUPFAM" id="SSF50615">
    <property type="entry name" value="N-terminal domain of alpha and beta subunits of F1 ATP synthase"/>
    <property type="match status" value="1"/>
</dbReference>
<dbReference type="SUPFAM" id="SSF52540">
    <property type="entry name" value="P-loop containing nucleoside triphosphate hydrolases"/>
    <property type="match status" value="1"/>
</dbReference>
<dbReference type="PROSITE" id="PS00152">
    <property type="entry name" value="ATPASE_ALPHA_BETA"/>
    <property type="match status" value="1"/>
</dbReference>
<name>ATPA_CAMJJ</name>
<sequence>MKFKADEISSIIKERIENFDLNLEIEETGKIISVADGVAKVYGLKNIMAGEMVEFENGDKGMALNLEESSVGIVILGKGEGLKEGASVKRLKKLLKVPVGEALIGRVVNALGEPIDAKGVINANEYRFVEEKAKGIMARKSVHEPLHTGIKAIDALVPIGRGQRELIIGDRQTGKTTVAVDTIISQRGQGVICIYVAIGQKQSTVAQVVKRLEEHGAMEYTIVVNAGASDPAALQYLAPYTGVTMGEFFRDNAKHALIVYDDLSKHAVAYREMSLILRRPPGREAYPGDVFYLHSRLLERASKLNDELGAGSLTALPIIETQAGDVSAYIPTNVISITDGQIFLETDLFNSGIRPAINVGLSVSRVGGAAQIKATKQVSGTLRLDLAQYRELQAFAQFASDLDEASRKQLERGQRMVELLKQPPYSPLSVEKQVVLIFAGTKGFLDDIAVSRIEEFEDGIYPFIEAKHPDIFEQIRSKKALDSDLEEKLAKAINEFKANHL</sequence>
<proteinExistence type="inferred from homology"/>
<evidence type="ECO:0000255" key="1">
    <source>
        <dbReference type="HAMAP-Rule" id="MF_01346"/>
    </source>
</evidence>
<protein>
    <recommendedName>
        <fullName evidence="1">ATP synthase subunit alpha</fullName>
        <ecNumber evidence="1">7.1.2.2</ecNumber>
    </recommendedName>
    <alternativeName>
        <fullName evidence="1">ATP synthase F1 sector subunit alpha</fullName>
    </alternativeName>
    <alternativeName>
        <fullName evidence="1">F-ATPase subunit alpha</fullName>
    </alternativeName>
</protein>
<keyword id="KW-0066">ATP synthesis</keyword>
<keyword id="KW-0067">ATP-binding</keyword>
<keyword id="KW-0997">Cell inner membrane</keyword>
<keyword id="KW-1003">Cell membrane</keyword>
<keyword id="KW-0139">CF(1)</keyword>
<keyword id="KW-0375">Hydrogen ion transport</keyword>
<keyword id="KW-0406">Ion transport</keyword>
<keyword id="KW-0472">Membrane</keyword>
<keyword id="KW-0547">Nucleotide-binding</keyword>
<keyword id="KW-1278">Translocase</keyword>
<keyword id="KW-0813">Transport</keyword>
<organism>
    <name type="scientific">Campylobacter jejuni subsp. jejuni serotype O:23/36 (strain 81-176)</name>
    <dbReference type="NCBI Taxonomy" id="354242"/>
    <lineage>
        <taxon>Bacteria</taxon>
        <taxon>Pseudomonadati</taxon>
        <taxon>Campylobacterota</taxon>
        <taxon>Epsilonproteobacteria</taxon>
        <taxon>Campylobacterales</taxon>
        <taxon>Campylobacteraceae</taxon>
        <taxon>Campylobacter</taxon>
    </lineage>
</organism>
<reference key="1">
    <citation type="submission" date="2006-12" db="EMBL/GenBank/DDBJ databases">
        <authorList>
            <person name="Fouts D.E."/>
            <person name="Nelson K.E."/>
            <person name="Sebastian Y."/>
        </authorList>
    </citation>
    <scope>NUCLEOTIDE SEQUENCE [LARGE SCALE GENOMIC DNA]</scope>
    <source>
        <strain>81-176</strain>
    </source>
</reference>
<accession>A1VXI8</accession>
<comment type="function">
    <text evidence="1">Produces ATP from ADP in the presence of a proton gradient across the membrane. The alpha chain is a regulatory subunit.</text>
</comment>
<comment type="catalytic activity">
    <reaction evidence="1">
        <text>ATP + H2O + 4 H(+)(in) = ADP + phosphate + 5 H(+)(out)</text>
        <dbReference type="Rhea" id="RHEA:57720"/>
        <dbReference type="ChEBI" id="CHEBI:15377"/>
        <dbReference type="ChEBI" id="CHEBI:15378"/>
        <dbReference type="ChEBI" id="CHEBI:30616"/>
        <dbReference type="ChEBI" id="CHEBI:43474"/>
        <dbReference type="ChEBI" id="CHEBI:456216"/>
        <dbReference type="EC" id="7.1.2.2"/>
    </reaction>
</comment>
<comment type="subunit">
    <text evidence="1">F-type ATPases have 2 components, CF(1) - the catalytic core - and CF(0) - the membrane proton channel. CF(1) has five subunits: alpha(3), beta(3), gamma(1), delta(1), epsilon(1). CF(0) has three main subunits: a(1), b(2) and c(9-12). The alpha and beta chains form an alternating ring which encloses part of the gamma chain. CF(1) is attached to CF(0) by a central stalk formed by the gamma and epsilon chains, while a peripheral stalk is formed by the delta and b chains.</text>
</comment>
<comment type="subcellular location">
    <subcellularLocation>
        <location evidence="1">Cell inner membrane</location>
        <topology evidence="1">Peripheral membrane protein</topology>
    </subcellularLocation>
</comment>
<comment type="similarity">
    <text evidence="1">Belongs to the ATPase alpha/beta chains family.</text>
</comment>